<gene>
    <name type="primary">CRLF1</name>
    <name type="ORF">UNQ288/PRO327</name>
</gene>
<protein>
    <recommendedName>
        <fullName>Cytokine receptor-like factor 1</fullName>
    </recommendedName>
    <alternativeName>
        <fullName>Cytokine-like factor 1</fullName>
        <shortName>CLF-1</shortName>
    </alternativeName>
    <alternativeName>
        <fullName>ZcytoR5</fullName>
    </alternativeName>
</protein>
<evidence type="ECO:0000250" key="1"/>
<evidence type="ECO:0000250" key="2">
    <source>
        <dbReference type="UniProtKB" id="Q9JM58"/>
    </source>
</evidence>
<evidence type="ECO:0000255" key="3"/>
<evidence type="ECO:0000255" key="4">
    <source>
        <dbReference type="PROSITE-ProRule" id="PRU00316"/>
    </source>
</evidence>
<evidence type="ECO:0000256" key="5">
    <source>
        <dbReference type="SAM" id="MobiDB-lite"/>
    </source>
</evidence>
<evidence type="ECO:0000269" key="6">
    <source>
    </source>
</evidence>
<evidence type="ECO:0000269" key="7">
    <source>
    </source>
</evidence>
<evidence type="ECO:0000269" key="8">
    <source>
    </source>
</evidence>
<evidence type="ECO:0000269" key="9">
    <source>
    </source>
</evidence>
<evidence type="ECO:0000269" key="10">
    <source>
    </source>
</evidence>
<evidence type="ECO:0000269" key="11">
    <source>
    </source>
</evidence>
<evidence type="ECO:0000269" key="12">
    <source>
    </source>
</evidence>
<evidence type="ECO:0000269" key="13">
    <source>
    </source>
</evidence>
<evidence type="ECO:0000269" key="14">
    <source>
    </source>
</evidence>
<evidence type="ECO:0000269" key="15">
    <source>
    </source>
</evidence>
<evidence type="ECO:0000305" key="16"/>
<evidence type="ECO:0000305" key="17">
    <source>
    </source>
</evidence>
<evidence type="ECO:0007829" key="18">
    <source>
        <dbReference type="PDB" id="8D7H"/>
    </source>
</evidence>
<comment type="function">
    <text evidence="17">In complex with CLCF1, forms a heterodimeric neurotropic cytokine that plays a crucial role during neuronal development (Probable). May also play a regulatory role in the immune system.</text>
</comment>
<comment type="subunit">
    <text evidence="14 15">Forms covalent di- and tetramers. Forms a heteromeric complex with cardiotrophin-like cytokine CLCF1/CLC; the CRLF1-CLCF1 complex is a ligand for the ciliary neurotrophic factor receptor/CNTFR (PubMed:26858303, PubMed:9686600). The CRLF1-CLCF1 heterodimer binds SORL1 (via N-terminal ectodomain); within this complex, the interaction is mediated predominantly by the CRLF1 moiety (PubMed:26858303). The tripartite signaling complex formed by CRLF1, CLCF1 and CNTFR also binds SORL1 (PubMed:26858303).</text>
</comment>
<comment type="interaction">
    <interactant intactId="EBI-15587902">
        <id>O75462</id>
    </interactant>
    <interactant intactId="EBI-15887997">
        <id>Q8NEV9</id>
        <label>IL27</label>
    </interactant>
    <organismsDiffer>false</organismsDiffer>
    <experiments>2</experiments>
</comment>
<comment type="interaction">
    <interactant intactId="EBI-15587902">
        <id>O75462</id>
    </interactant>
    <interactant intactId="EBI-1171329">
        <id>Q92673</id>
        <label>SORL1</label>
    </interactant>
    <organismsDiffer>false</organismsDiffer>
    <experiments>3</experiments>
</comment>
<comment type="subcellular location">
    <subcellularLocation>
        <location evidence="15">Secreted</location>
    </subcellularLocation>
</comment>
<comment type="tissue specificity">
    <text evidence="15">Highest levels of expression observed in spleen, thymus, lymph node, appendix, bone marrow, stomach, placenta, heart, thyroid and ovary. Strongly expressed also in fetal lung.</text>
</comment>
<comment type="induction">
    <text evidence="15">Up-regulated in fibroblast primary cell cultures under stimulation by IFNG/IFN-gamma, TNF and IL6/interleukin-6.</text>
</comment>
<comment type="domain">
    <text>The WSXWS motif appears to be necessary for proper protein folding and thereby efficient intracellular transport and cell-surface receptor binding.</text>
</comment>
<comment type="disease" evidence="6 8 9 10 11 12 13">
    <disease id="DI-01356">
        <name>Crisponi/Cold-induced sweating syndrome 1</name>
        <acronym>CISS1</acronym>
        <description>An autosomal recessive disorder characterized by profuse sweating induced by cool surroundings (temperatures of 7 to 18 degrees Celsius). Patients manifest, in the neonatal period, orofacial weakness with impaired sucking and swallowing, resulting in poor feeding. Affected infants show a tendency to startle, with contractions of the facial muscles in response to tactile stimuli or during crying, trismus, abundant salivation, and opisthotonus. These features are referred to as Crisponi syndrome and can result in early death in infancy. Patients who survive into childhood have hyperhidrosis, mainly of the upper body, in response to cold temperatures, and sweat very little with heat. Additional abnormalities include a high-arched palate, nasal voice, depressed nasal bridge, inability to fully extend the elbows and kyphoscoliosis.</description>
        <dbReference type="MIM" id="272430"/>
    </disease>
    <text>The disease is caused by variants affecting the gene represented in this entry.</text>
</comment>
<comment type="similarity">
    <text evidence="16">Belongs to the type I cytokine receptor family. Type 3 subfamily.</text>
</comment>
<accession>O75462</accession>
<accession>Q9UHH5</accession>
<feature type="signal peptide" evidence="7">
    <location>
        <begin position="1"/>
        <end position="37"/>
    </location>
</feature>
<feature type="chain" id="PRO_0000011039" description="Cytokine receptor-like factor 1">
    <location>
        <begin position="38"/>
        <end position="422"/>
    </location>
</feature>
<feature type="domain" description="Ig-like C2-type">
    <location>
        <begin position="38"/>
        <end position="131"/>
    </location>
</feature>
<feature type="domain" description="Fibronectin type-III 1" evidence="4">
    <location>
        <begin position="137"/>
        <end position="232"/>
    </location>
</feature>
<feature type="domain" description="Fibronectin type-III 2" evidence="4">
    <location>
        <begin position="237"/>
        <end position="341"/>
    </location>
</feature>
<feature type="region of interest" description="Disordered" evidence="5">
    <location>
        <begin position="332"/>
        <end position="363"/>
    </location>
</feature>
<feature type="region of interest" description="Disordered" evidence="5">
    <location>
        <begin position="399"/>
        <end position="422"/>
    </location>
</feature>
<feature type="short sequence motif" description="WSXWS motif">
    <location>
        <begin position="327"/>
        <end position="331"/>
    </location>
</feature>
<feature type="modified residue" description="Phosphoserine" evidence="2">
    <location>
        <position position="219"/>
    </location>
</feature>
<feature type="glycosylation site" description="N-linked (GlcNAc...) asparagine" evidence="3">
    <location>
        <position position="92"/>
    </location>
</feature>
<feature type="glycosylation site" description="N-linked (GlcNAc...) asparagine" evidence="3">
    <location>
        <position position="104"/>
    </location>
</feature>
<feature type="glycosylation site" description="N-linked (GlcNAc...) asparagine" evidence="3">
    <location>
        <position position="140"/>
    </location>
</feature>
<feature type="glycosylation site" description="N-linked (GlcNAc...) asparagine" evidence="3">
    <location>
        <position position="168"/>
    </location>
</feature>
<feature type="glycosylation site" description="N-linked (GlcNAc...) asparagine" evidence="3">
    <location>
        <position position="292"/>
    </location>
</feature>
<feature type="glycosylation site" description="N-linked (GlcNAc...) asparagine" evidence="3">
    <location>
        <position position="382"/>
    </location>
</feature>
<feature type="disulfide bond" evidence="1">
    <location>
        <begin position="143"/>
        <end position="153"/>
    </location>
</feature>
<feature type="disulfide bond" evidence="1">
    <location>
        <begin position="184"/>
        <end position="195"/>
    </location>
</feature>
<feature type="sequence variant" id="VAR_070817" description="In CISS1; dbSNP:rs1295488778." evidence="13">
    <original>L</original>
    <variation>P</variation>
    <location>
        <position position="74"/>
    </location>
</feature>
<feature type="sequence variant" id="VAR_070818" description="In CISS1." evidence="11">
    <original>Y</original>
    <variation>D</variation>
    <location>
        <position position="75"/>
    </location>
</feature>
<feature type="sequence variant" id="VAR_033113" description="In CISS1; dbSNP:rs137853143." evidence="9 10">
    <original>W</original>
    <variation>G</variation>
    <location>
        <position position="76"/>
    </location>
</feature>
<feature type="sequence variant" id="VAR_017865" description="In CISS1; dbSNP:rs104894670." evidence="6">
    <original>R</original>
    <variation>H</variation>
    <location>
        <position position="81"/>
    </location>
</feature>
<feature type="sequence variant" id="VAR_070819" description="In CISS1; together with P-114." evidence="11">
    <original>N</original>
    <variation>I</variation>
    <location>
        <position position="113"/>
    </location>
</feature>
<feature type="sequence variant" id="VAR_070820" description="In CISS1; together with I-113; dbSNP:rs774359694." evidence="11">
    <original>L</original>
    <variation>P</variation>
    <location>
        <position position="114"/>
    </location>
</feature>
<feature type="sequence variant" id="VAR_070821" description="In CISS1; dbSNP:rs137853930." evidence="12">
    <original>P</original>
    <variation>L</variation>
    <location>
        <position position="138"/>
    </location>
</feature>
<feature type="sequence variant" id="VAR_070822" description="In CISS1." evidence="13">
    <original>S</original>
    <variation>P</variation>
    <location>
        <position position="145"/>
    </location>
</feature>
<feature type="sequence variant" id="VAR_028355" description="In dbSNP:rs11672248.">
    <original>R</original>
    <variation>K</variation>
    <location>
        <position position="176"/>
    </location>
</feature>
<feature type="sequence variant" id="VAR_070823" description="In CISS1; dbSNP:rs556029569." evidence="13">
    <original>R</original>
    <variation>C</variation>
    <location>
        <position position="216"/>
    </location>
</feature>
<feature type="sequence variant" id="VAR_070824" description="In CISS1; dbSNP:rs761982168." evidence="13">
    <original>F</original>
    <variation>S</variation>
    <location>
        <position position="268"/>
    </location>
</feature>
<feature type="sequence variant" id="VAR_070825" description="In CISS1; dbSNP:rs137853927." evidence="8">
    <original>W</original>
    <variation>C</variation>
    <location>
        <position position="284"/>
    </location>
</feature>
<feature type="sequence variant" id="VAR_070826" description="In CISS1; dbSNP:rs137853933." evidence="13">
    <original>R</original>
    <variation>P</variation>
    <location>
        <position position="312"/>
    </location>
</feature>
<feature type="sequence variant" id="VAR_070827" description="In CISS1; dbSNP:rs771459625." evidence="13">
    <original>R</original>
    <variation>C</variation>
    <location>
        <position position="340"/>
    </location>
</feature>
<feature type="sequence variant" id="VAR_017866" description="In CISS1; dbSNP:rs104894668." evidence="6">
    <original>L</original>
    <variation>R</variation>
    <location>
        <position position="374"/>
    </location>
</feature>
<feature type="sequence conflict" description="In Ref. 3; AAD54385." evidence="16" ref="3">
    <original>D</original>
    <variation>E</variation>
    <location>
        <position position="240"/>
    </location>
</feature>
<feature type="strand" evidence="18">
    <location>
        <begin position="42"/>
        <end position="47"/>
    </location>
</feature>
<feature type="strand" evidence="18">
    <location>
        <begin position="49"/>
        <end position="51"/>
    </location>
</feature>
<feature type="strand" evidence="18">
    <location>
        <begin position="56"/>
        <end position="61"/>
    </location>
</feature>
<feature type="helix" evidence="18">
    <location>
        <begin position="70"/>
        <end position="73"/>
    </location>
</feature>
<feature type="strand" evidence="18">
    <location>
        <begin position="75"/>
        <end position="78"/>
    </location>
</feature>
<feature type="turn" evidence="18">
    <location>
        <begin position="85"/>
        <end position="87"/>
    </location>
</feature>
<feature type="strand" evidence="18">
    <location>
        <begin position="88"/>
        <end position="92"/>
    </location>
</feature>
<feature type="strand" evidence="18">
    <location>
        <begin position="95"/>
        <end position="100"/>
    </location>
</feature>
<feature type="strand" evidence="18">
    <location>
        <begin position="112"/>
        <end position="117"/>
    </location>
</feature>
<feature type="strand" evidence="18">
    <location>
        <begin position="123"/>
        <end position="132"/>
    </location>
</feature>
<feature type="strand" evidence="18">
    <location>
        <begin position="139"/>
        <end position="146"/>
    </location>
</feature>
<feature type="strand" evidence="18">
    <location>
        <begin position="151"/>
        <end position="156"/>
    </location>
</feature>
<feature type="strand" evidence="18">
    <location>
        <begin position="160"/>
        <end position="165"/>
    </location>
</feature>
<feature type="strand" evidence="18">
    <location>
        <begin position="168"/>
        <end position="178"/>
    </location>
</feature>
<feature type="strand" evidence="18">
    <location>
        <begin position="189"/>
        <end position="197"/>
    </location>
</feature>
<feature type="strand" evidence="18">
    <location>
        <begin position="203"/>
        <end position="205"/>
    </location>
</feature>
<feature type="strand" evidence="18">
    <location>
        <begin position="207"/>
        <end position="214"/>
    </location>
</feature>
<feature type="strand" evidence="18">
    <location>
        <begin position="219"/>
        <end position="221"/>
    </location>
</feature>
<feature type="strand" evidence="18">
    <location>
        <begin position="225"/>
        <end position="227"/>
    </location>
</feature>
<feature type="helix" evidence="18">
    <location>
        <begin position="229"/>
        <end position="231"/>
    </location>
</feature>
<feature type="strand" evidence="18">
    <location>
        <begin position="232"/>
        <end position="234"/>
    </location>
</feature>
<feature type="strand" evidence="18">
    <location>
        <begin position="242"/>
        <end position="244"/>
    </location>
</feature>
<feature type="strand" evidence="18">
    <location>
        <begin position="254"/>
        <end position="256"/>
    </location>
</feature>
<feature type="strand" evidence="18">
    <location>
        <begin position="265"/>
        <end position="267"/>
    </location>
</feature>
<feature type="strand" evidence="18">
    <location>
        <begin position="270"/>
        <end position="278"/>
    </location>
</feature>
<feature type="strand" evidence="18">
    <location>
        <begin position="284"/>
        <end position="286"/>
    </location>
</feature>
<feature type="strand" evidence="18">
    <location>
        <begin position="294"/>
        <end position="296"/>
    </location>
</feature>
<feature type="strand" evidence="18">
    <location>
        <begin position="306"/>
        <end position="315"/>
    </location>
</feature>
<feature type="strand" evidence="18">
    <location>
        <begin position="334"/>
        <end position="337"/>
    </location>
</feature>
<proteinExistence type="evidence at protein level"/>
<name>CRLF1_HUMAN</name>
<sequence>MPAGRRGPAAQSARRPPPLLPLLLLLCVLGAPRAGSGAHTAVISPQDPTLLIGSSLLATCSVHGDPPGATAEGLYWTLNGRRLPPELSRVLNASTLALALANLNGSRQRSGDNLVCHARDGSILAGSCLYVGLPPEKPVNISCWSKNMKDLTCRWTPGAHGETFLHTNYSLKYKLRWYGQDNTCEEYHTVGPHSCHIPKDLALFTPYEIWVEATNRLGSARSDVLTLDILDVVTTDPPPDVHVSRVGGLEDQLSVRWVSPPALKDFLFQAKYQIRYRVEDSVDWKVVDDVSNQTSCRLAGLKPGTVYFVQVRCNPFGIYGSKKAGIWSEWSHPTAASTPRSERPGPGGGACEPRGGEPSSGPVRRELKQFLGWLKKHAYCSNLSFRLYDQWRAWMQKSHKTRNQDEGILPSGRRGTARGPAR</sequence>
<keyword id="KW-0002">3D-structure</keyword>
<keyword id="KW-0903">Direct protein sequencing</keyword>
<keyword id="KW-0225">Disease variant</keyword>
<keyword id="KW-1015">Disulfide bond</keyword>
<keyword id="KW-0325">Glycoprotein</keyword>
<keyword id="KW-0393">Immunoglobulin domain</keyword>
<keyword id="KW-0597">Phosphoprotein</keyword>
<keyword id="KW-1267">Proteomics identification</keyword>
<keyword id="KW-0675">Receptor</keyword>
<keyword id="KW-1185">Reference proteome</keyword>
<keyword id="KW-0677">Repeat</keyword>
<keyword id="KW-0964">Secreted</keyword>
<keyword id="KW-0732">Signal</keyword>
<organism>
    <name type="scientific">Homo sapiens</name>
    <name type="common">Human</name>
    <dbReference type="NCBI Taxonomy" id="9606"/>
    <lineage>
        <taxon>Eukaryota</taxon>
        <taxon>Metazoa</taxon>
        <taxon>Chordata</taxon>
        <taxon>Craniata</taxon>
        <taxon>Vertebrata</taxon>
        <taxon>Euteleostomi</taxon>
        <taxon>Mammalia</taxon>
        <taxon>Eutheria</taxon>
        <taxon>Euarchontoglires</taxon>
        <taxon>Primates</taxon>
        <taxon>Haplorrhini</taxon>
        <taxon>Catarrhini</taxon>
        <taxon>Hominidae</taxon>
        <taxon>Homo</taxon>
    </lineage>
</organism>
<reference key="1">
    <citation type="journal article" date="1998" name="J. Immunol.">
        <title>Cytokine-like factor-1, a novel soluble protein, shares homology with members of the cytokine type I receptor family.</title>
        <authorList>
            <person name="Elson G.C.A."/>
            <person name="Graber P."/>
            <person name="Losberger C."/>
            <person name="Herren S."/>
            <person name="Gretener D."/>
            <person name="Menoud L.N."/>
            <person name="Wells T.N.C."/>
            <person name="Kosco-Vilbois M.H."/>
            <person name="Gauchat J.-F."/>
        </authorList>
    </citation>
    <scope>NUCLEOTIDE SEQUENCE [MRNA]</scope>
    <scope>SUBUNIT</scope>
    <scope>SUBCELLULAR LOCATION</scope>
    <scope>TISSUE SPECIFICITY</scope>
    <scope>INDUCTION</scope>
    <source>
        <tissue>Fetal lung</tissue>
    </source>
</reference>
<reference key="2">
    <citation type="submission" date="1998-06" db="EMBL/GenBank/DDBJ databases">
        <title>Cloning and expression of a novel soluble protein containing hematopoietic cytokine receptor domains.</title>
        <authorList>
            <person name="Magrangeas F."/>
            <person name="Jacques Y."/>
            <person name="Minvielle S."/>
        </authorList>
    </citation>
    <scope>NUCLEOTIDE SEQUENCE [MRNA]</scope>
</reference>
<reference key="3">
    <citation type="submission" date="1999-08" db="EMBL/GenBank/DDBJ databases">
        <authorList>
            <person name="Lok S."/>
            <person name="Presnell S.R."/>
            <person name="Jelmberg A.C."/>
            <person name="Gilbert T."/>
            <person name="Whitmore T.E."/>
            <person name="Foster D.C."/>
            <person name="Adams R.L."/>
            <person name="Lehner J.M."/>
            <person name="O'Hara P.J."/>
        </authorList>
    </citation>
    <scope>NUCLEOTIDE SEQUENCE [MRNA]</scope>
</reference>
<reference key="4">
    <citation type="journal article" date="2003" name="Genome Res.">
        <title>The secreted protein discovery initiative (SPDI), a large-scale effort to identify novel human secreted and transmembrane proteins: a bioinformatics assessment.</title>
        <authorList>
            <person name="Clark H.F."/>
            <person name="Gurney A.L."/>
            <person name="Abaya E."/>
            <person name="Baker K."/>
            <person name="Baldwin D.T."/>
            <person name="Brush J."/>
            <person name="Chen J."/>
            <person name="Chow B."/>
            <person name="Chui C."/>
            <person name="Crowley C."/>
            <person name="Currell B."/>
            <person name="Deuel B."/>
            <person name="Dowd P."/>
            <person name="Eaton D."/>
            <person name="Foster J.S."/>
            <person name="Grimaldi C."/>
            <person name="Gu Q."/>
            <person name="Hass P.E."/>
            <person name="Heldens S."/>
            <person name="Huang A."/>
            <person name="Kim H.S."/>
            <person name="Klimowski L."/>
            <person name="Jin Y."/>
            <person name="Johnson S."/>
            <person name="Lee J."/>
            <person name="Lewis L."/>
            <person name="Liao D."/>
            <person name="Mark M.R."/>
            <person name="Robbie E."/>
            <person name="Sanchez C."/>
            <person name="Schoenfeld J."/>
            <person name="Seshagiri S."/>
            <person name="Simmons L."/>
            <person name="Singh J."/>
            <person name="Smith V."/>
            <person name="Stinson J."/>
            <person name="Vagts A."/>
            <person name="Vandlen R.L."/>
            <person name="Watanabe C."/>
            <person name="Wieand D."/>
            <person name="Woods K."/>
            <person name="Xie M.-H."/>
            <person name="Yansura D.G."/>
            <person name="Yi S."/>
            <person name="Yu G."/>
            <person name="Yuan J."/>
            <person name="Zhang M."/>
            <person name="Zhang Z."/>
            <person name="Goddard A.D."/>
            <person name="Wood W.I."/>
            <person name="Godowski P.J."/>
            <person name="Gray A.M."/>
        </authorList>
    </citation>
    <scope>NUCLEOTIDE SEQUENCE [LARGE SCALE MRNA]</scope>
</reference>
<reference key="5">
    <citation type="journal article" date="2004" name="Genome Res.">
        <title>The status, quality, and expansion of the NIH full-length cDNA project: the Mammalian Gene Collection (MGC).</title>
        <authorList>
            <consortium name="The MGC Project Team"/>
        </authorList>
    </citation>
    <scope>NUCLEOTIDE SEQUENCE [LARGE SCALE MRNA]</scope>
    <source>
        <tissue>Lymph</tissue>
    </source>
</reference>
<reference key="6">
    <citation type="journal article" date="2004" name="Protein Sci.">
        <title>Signal peptide prediction based on analysis of experimentally verified cleavage sites.</title>
        <authorList>
            <person name="Zhang Z."/>
            <person name="Henzel W.J."/>
        </authorList>
    </citation>
    <scope>PROTEIN SEQUENCE OF 38-52</scope>
</reference>
<reference key="7">
    <citation type="journal article" date="2000" name="Nat. Neurosci.">
        <title>CLF associates with CLC to form a functional heteromeric ligand for the CNTF receptor complex.</title>
        <authorList>
            <person name="Elson G.C.A."/>
            <person name="Lelievre E."/>
            <person name="Guillet C."/>
            <person name="Chevalier S."/>
            <person name="Plun-Favreau H."/>
            <person name="Froger J."/>
            <person name="Suard I."/>
            <person name="de Coignac A.B."/>
            <person name="Delneste Y."/>
            <person name="Bonnefoy J.-Y."/>
            <person name="Gauchat J.-F."/>
            <person name="Gascan H."/>
        </authorList>
    </citation>
    <scope>INTERACTION WITH CLCF1 AND CNTFR</scope>
</reference>
<reference key="8">
    <citation type="journal article" date="2016" name="Mol. Cell. Biol.">
        <title>Cytokine-like factor 1, an essential facilitator of cardiotrophin-like cytokine:ciliary neurotrophic factor receptor alpha signaling and sorLA-mediated turnover.</title>
        <authorList>
            <person name="Larsen J.V."/>
            <person name="Kristensen A.M."/>
            <person name="Pallesen L.T."/>
            <person name="Bauer J."/>
            <person name="Vaegter C.B."/>
            <person name="Nielsen M.S."/>
            <person name="Madsen P."/>
            <person name="Petersen C.M."/>
        </authorList>
    </citation>
    <scope>INTERACTION WITH CLCF1; CNTFR AND SORL1</scope>
</reference>
<reference key="9">
    <citation type="journal article" date="2003" name="Am. J. Hum. Genet.">
        <title>Cold-induced sweating syndrome is caused by mutations in the CRLF1 gene.</title>
        <authorList>
            <person name="Knappskog P.M."/>
            <person name="Majewski J."/>
            <person name="Livneh A."/>
            <person name="Nilsen P.T.E."/>
            <person name="Bringsli J.S."/>
            <person name="Ott J."/>
            <person name="Boman H."/>
        </authorList>
    </citation>
    <scope>VARIANTS CISS1 HIS-81 AND ARG-374</scope>
</reference>
<reference key="10">
    <citation type="journal article" date="2006" name="J. Neurol. Sci.">
        <title>Cold-induced sweating syndrome: a report of two cases and demonstration of genetic heterogeneity.</title>
        <authorList>
            <person name="Hahn A.F."/>
            <person name="Jones D.L."/>
            <person name="Knappskog P.M."/>
            <person name="Boman H."/>
            <person name="McLeod J.G."/>
        </authorList>
    </citation>
    <scope>VARIANT CISS1 CYS-284</scope>
</reference>
<reference key="11">
    <citation type="journal article" date="2007" name="Am. J. Hum. Genet.">
        <title>Mutations in cytokine receptor-like factor 1 (CRLF1) account for both Crisponi and cold-induced sweating syndromes.</title>
        <authorList>
            <person name="Dagoneau N."/>
            <person name="Bellais S."/>
            <person name="Blanchet P."/>
            <person name="Sarda P."/>
            <person name="Al-Gazali L.I."/>
            <person name="Di Rocco M."/>
            <person name="Huber C."/>
            <person name="Djouadi F."/>
            <person name="Le Goff C."/>
            <person name="Munnich A."/>
            <person name="Cormier-Daire V."/>
        </authorList>
    </citation>
    <scope>VARIANT CISS1 GLY-76</scope>
</reference>
<reference key="12">
    <citation type="journal article" date="2007" name="Am. J. Hum. Genet.">
        <title>Crisponi syndrome is caused by mutations in the CRLF1 gene and is allelic to cold-induced sweating syndrome type 1.</title>
        <authorList>
            <person name="Crisponi L."/>
            <person name="Crisponi G."/>
            <person name="Meloni A."/>
            <person name="Toliat M.R."/>
            <person name="Nurnberg G."/>
            <person name="Usala G."/>
            <person name="Uda M."/>
            <person name="Masala M."/>
            <person name="Hohne W."/>
            <person name="Becker C."/>
            <person name="Marongiu M."/>
            <person name="Chiappe F."/>
            <person name="Kleta R."/>
            <person name="Rauch A."/>
            <person name="Wollnik B."/>
            <person name="Strasser F."/>
            <person name="Reese T."/>
            <person name="Jakobs C."/>
            <person name="Kurlemann G."/>
            <person name="Cao A."/>
            <person name="Nurnberg P."/>
            <person name="Rutsch F."/>
        </authorList>
    </citation>
    <scope>VARIANT CISS1 GLY-76</scope>
</reference>
<reference key="13">
    <citation type="journal article" date="2011" name="Eur. J. Hum. Genet.">
        <title>Differential secretion of the mutated protein is a major component affecting phenotypic severity in CRLF1-associated disorders.</title>
        <authorList>
            <person name="Herholz J."/>
            <person name="Meloni A."/>
            <person name="Marongiu M."/>
            <person name="Chiappe F."/>
            <person name="Deiana M."/>
            <person name="Herrero C.R."/>
            <person name="Zampino G."/>
            <person name="Hamamy H."/>
            <person name="Zalloum Y."/>
            <person name="Waaler P.E."/>
            <person name="Crisponi G."/>
            <person name="Crisponi L."/>
            <person name="Rutsch F."/>
        </authorList>
    </citation>
    <scope>VARIANTS CISS1 ASP-75; ILE-113 AND PRO-114</scope>
</reference>
<reference key="14">
    <citation type="journal article" date="2013" name="Brain Dev.">
        <title>Multiple small hyperintense lesions in the subcortical white matter on cranial MR images in two Turkish brothers with cold-induced sweating syndrome caused by a novel missense mutation in the CRLF1 gene.</title>
        <authorList>
            <person name="Tuysuz B."/>
            <person name="Kasapcopur O."/>
            <person name="Yalcinkaya C."/>
            <person name="Isik Hasiloglu Z."/>
            <person name="Knappskog P.M."/>
            <person name="Boman H."/>
        </authorList>
    </citation>
    <scope>VARIANT CISS1 LEU-138</scope>
</reference>
<reference key="15">
    <citation type="journal article" date="2014" name="Hum. Mutat.">
        <title>Expanding the mutational spectrum of CRLF1 in Crisponi/CISS1 syndrome.</title>
        <authorList>
            <person name="Piras R."/>
            <person name="Chiappe F."/>
            <person name="Torraca I.L."/>
            <person name="Buers I."/>
            <person name="Usala G."/>
            <person name="Angius A."/>
            <person name="Akin M.A."/>
            <person name="Basel-Vanagaite L."/>
            <person name="Benedicenti F."/>
            <person name="Chiodin E."/>
            <person name="El Assy O."/>
            <person name="Feingold-Zadok M."/>
            <person name="Guibert J."/>
            <person name="Kamien B."/>
            <person name="Kasapkara C.S."/>
            <person name="Kilic E."/>
            <person name="Boduroglu K."/>
            <person name="Kurtoglu S."/>
            <person name="Manzur A.Y."/>
            <person name="Onal E.E."/>
            <person name="Paderi E."/>
            <person name="Roche C.H."/>
            <person name="Tumer L."/>
            <person name="Unal S."/>
            <person name="Utine G.E."/>
            <person name="Zanda G."/>
            <person name="Zankl A."/>
            <person name="Zampino G."/>
            <person name="Crisponi G."/>
            <person name="Crisponi L."/>
            <person name="Rutsch F."/>
        </authorList>
    </citation>
    <scope>VARIANTS CISS1 PRO-74; PRO-145; CYS-216; SER-268; PRO-312 AND CYS-340</scope>
</reference>
<dbReference type="EMBL" id="AF059293">
    <property type="protein sequence ID" value="AAC28335.1"/>
    <property type="molecule type" value="mRNA"/>
</dbReference>
<dbReference type="EMBL" id="AF073515">
    <property type="protein sequence ID" value="AAD39681.1"/>
    <property type="molecule type" value="mRNA"/>
</dbReference>
<dbReference type="EMBL" id="AF178684">
    <property type="protein sequence ID" value="AAD54385.1"/>
    <property type="molecule type" value="mRNA"/>
</dbReference>
<dbReference type="EMBL" id="AY358291">
    <property type="protein sequence ID" value="AAQ88658.1"/>
    <property type="molecule type" value="mRNA"/>
</dbReference>
<dbReference type="EMBL" id="BC044634">
    <property type="protein sequence ID" value="AAH44634.1"/>
    <property type="molecule type" value="mRNA"/>
</dbReference>
<dbReference type="CCDS" id="CCDS32962.1"/>
<dbReference type="RefSeq" id="NP_004741.1">
    <property type="nucleotide sequence ID" value="NM_004750.5"/>
</dbReference>
<dbReference type="PDB" id="8D7H">
    <property type="method" value="EM"/>
    <property type="resolution" value="3.40 A"/>
    <property type="chains" value="A/E=38-422"/>
</dbReference>
<dbReference type="PDBsum" id="8D7H"/>
<dbReference type="EMDB" id="EMD-27230"/>
<dbReference type="SMR" id="O75462"/>
<dbReference type="BioGRID" id="114670">
    <property type="interactions" value="127"/>
</dbReference>
<dbReference type="CORUM" id="O75462"/>
<dbReference type="DIP" id="DIP-61205N"/>
<dbReference type="FunCoup" id="O75462">
    <property type="interactions" value="124"/>
</dbReference>
<dbReference type="IntAct" id="O75462">
    <property type="interactions" value="71"/>
</dbReference>
<dbReference type="STRING" id="9606.ENSP00000376188"/>
<dbReference type="GlyConnect" id="1167">
    <property type="glycosylation" value="3 N-Linked glycans (1 site)"/>
</dbReference>
<dbReference type="GlyCosmos" id="O75462">
    <property type="glycosylation" value="6 sites, 3 glycans"/>
</dbReference>
<dbReference type="GlyGen" id="O75462">
    <property type="glycosylation" value="7 sites, 7 N-linked glycans (5 sites), 1 O-linked glycan (1 site)"/>
</dbReference>
<dbReference type="iPTMnet" id="O75462"/>
<dbReference type="PhosphoSitePlus" id="O75462"/>
<dbReference type="BioMuta" id="CRLF1"/>
<dbReference type="jPOST" id="O75462"/>
<dbReference type="MassIVE" id="O75462"/>
<dbReference type="PaxDb" id="9606-ENSP00000376188"/>
<dbReference type="PeptideAtlas" id="O75462"/>
<dbReference type="ProteomicsDB" id="50025"/>
<dbReference type="Pumba" id="O75462"/>
<dbReference type="Antibodypedia" id="28115">
    <property type="antibodies" value="244 antibodies from 27 providers"/>
</dbReference>
<dbReference type="DNASU" id="9244"/>
<dbReference type="Ensembl" id="ENST00000392386.8">
    <property type="protein sequence ID" value="ENSP00000376188.2"/>
    <property type="gene ID" value="ENSG00000006016.12"/>
</dbReference>
<dbReference type="GeneID" id="9244"/>
<dbReference type="KEGG" id="hsa:9244"/>
<dbReference type="MANE-Select" id="ENST00000392386.8">
    <property type="protein sequence ID" value="ENSP00000376188.2"/>
    <property type="RefSeq nucleotide sequence ID" value="NM_004750.5"/>
    <property type="RefSeq protein sequence ID" value="NP_004741.1"/>
</dbReference>
<dbReference type="UCSC" id="uc010ebt.3">
    <property type="organism name" value="human"/>
</dbReference>
<dbReference type="AGR" id="HGNC:2364"/>
<dbReference type="CTD" id="9244"/>
<dbReference type="DisGeNET" id="9244"/>
<dbReference type="GeneCards" id="CRLF1"/>
<dbReference type="GeneReviews" id="CRLF1"/>
<dbReference type="HGNC" id="HGNC:2364">
    <property type="gene designation" value="CRLF1"/>
</dbReference>
<dbReference type="HPA" id="ENSG00000006016">
    <property type="expression patterns" value="Tissue enhanced (brain, heart muscle)"/>
</dbReference>
<dbReference type="MalaCards" id="CRLF1"/>
<dbReference type="MIM" id="272430">
    <property type="type" value="phenotype"/>
</dbReference>
<dbReference type="MIM" id="604237">
    <property type="type" value="gene"/>
</dbReference>
<dbReference type="neXtProt" id="NX_O75462"/>
<dbReference type="OpenTargets" id="ENSG00000006016"/>
<dbReference type="Orphanet" id="157820">
    <property type="disease" value="Cold-induced sweating syndrome"/>
</dbReference>
<dbReference type="Orphanet" id="1545">
    <property type="disease" value="Crisponi syndrome"/>
</dbReference>
<dbReference type="Orphanet" id="930">
    <property type="disease" value="Idiopathic achalasia"/>
</dbReference>
<dbReference type="PharmGKB" id="PA26882"/>
<dbReference type="VEuPathDB" id="HostDB:ENSG00000006016"/>
<dbReference type="eggNOG" id="KOG3656">
    <property type="taxonomic scope" value="Eukaryota"/>
</dbReference>
<dbReference type="GeneTree" id="ENSGT00940000156569"/>
<dbReference type="HOGENOM" id="CLU_017892_0_0_1"/>
<dbReference type="InParanoid" id="O75462"/>
<dbReference type="OMA" id="PGVCEPK"/>
<dbReference type="OrthoDB" id="9404142at2759"/>
<dbReference type="PAN-GO" id="O75462">
    <property type="GO annotations" value="7 GO annotations based on evolutionary models"/>
</dbReference>
<dbReference type="PhylomeDB" id="O75462"/>
<dbReference type="TreeFam" id="TF106501"/>
<dbReference type="BRENDA" id="1.1.1.105">
    <property type="organism ID" value="2681"/>
</dbReference>
<dbReference type="PathwayCommons" id="O75462"/>
<dbReference type="Reactome" id="R-HSA-6788467">
    <property type="pathway name" value="IL-6-type cytokine receptor ligand interactions"/>
</dbReference>
<dbReference type="Reactome" id="R-HSA-9020956">
    <property type="pathway name" value="Interleukin-27 signaling"/>
</dbReference>
<dbReference type="SignaLink" id="O75462"/>
<dbReference type="SIGNOR" id="O75462"/>
<dbReference type="BioGRID-ORCS" id="9244">
    <property type="hits" value="11 hits in 1149 CRISPR screens"/>
</dbReference>
<dbReference type="GeneWiki" id="CRLF1"/>
<dbReference type="GenomeRNAi" id="9244"/>
<dbReference type="Pharos" id="O75462">
    <property type="development level" value="Tbio"/>
</dbReference>
<dbReference type="PRO" id="PR:O75462"/>
<dbReference type="Proteomes" id="UP000005640">
    <property type="component" value="Chromosome 19"/>
</dbReference>
<dbReference type="RNAct" id="O75462">
    <property type="molecule type" value="protein"/>
</dbReference>
<dbReference type="Bgee" id="ENSG00000006016">
    <property type="expression patterns" value="Expressed in right coronary artery and 150 other cell types or tissues"/>
</dbReference>
<dbReference type="ExpressionAtlas" id="O75462">
    <property type="expression patterns" value="baseline and differential"/>
</dbReference>
<dbReference type="GO" id="GO:0097058">
    <property type="term" value="C:CRLF-CLCF1 complex"/>
    <property type="evidence" value="ECO:0000314"/>
    <property type="project" value="BHF-UCL"/>
</dbReference>
<dbReference type="GO" id="GO:0005829">
    <property type="term" value="C:cytosol"/>
    <property type="evidence" value="ECO:0000304"/>
    <property type="project" value="Reactome"/>
</dbReference>
<dbReference type="GO" id="GO:0009897">
    <property type="term" value="C:external side of plasma membrane"/>
    <property type="evidence" value="ECO:0000318"/>
    <property type="project" value="GO_Central"/>
</dbReference>
<dbReference type="GO" id="GO:0005576">
    <property type="term" value="C:extracellular region"/>
    <property type="evidence" value="ECO:0000304"/>
    <property type="project" value="Reactome"/>
</dbReference>
<dbReference type="GO" id="GO:0005615">
    <property type="term" value="C:extracellular space"/>
    <property type="evidence" value="ECO:0000304"/>
    <property type="project" value="ProtInc"/>
</dbReference>
<dbReference type="GO" id="GO:0043235">
    <property type="term" value="C:receptor complex"/>
    <property type="evidence" value="ECO:0000318"/>
    <property type="project" value="GO_Central"/>
</dbReference>
<dbReference type="GO" id="GO:0019955">
    <property type="term" value="F:cytokine binding"/>
    <property type="evidence" value="ECO:0000353"/>
    <property type="project" value="HGNC-UCL"/>
</dbReference>
<dbReference type="GO" id="GO:0004896">
    <property type="term" value="F:cytokine receptor activity"/>
    <property type="evidence" value="ECO:0000318"/>
    <property type="project" value="GO_Central"/>
</dbReference>
<dbReference type="GO" id="GO:0097696">
    <property type="term" value="P:cell surface receptor signaling pathway via STAT"/>
    <property type="evidence" value="ECO:0000314"/>
    <property type="project" value="ARUK-UCL"/>
</dbReference>
<dbReference type="GO" id="GO:0019221">
    <property type="term" value="P:cytokine-mediated signaling pathway"/>
    <property type="evidence" value="ECO:0000318"/>
    <property type="project" value="GO_Central"/>
</dbReference>
<dbReference type="GO" id="GO:2000672">
    <property type="term" value="P:negative regulation of motor neuron apoptotic process"/>
    <property type="evidence" value="ECO:0007669"/>
    <property type="project" value="Ensembl"/>
</dbReference>
<dbReference type="GO" id="GO:0043524">
    <property type="term" value="P:negative regulation of neuron apoptotic process"/>
    <property type="evidence" value="ECO:0000314"/>
    <property type="project" value="BHF-UCL"/>
</dbReference>
<dbReference type="GO" id="GO:0008284">
    <property type="term" value="P:positive regulation of cell population proliferation"/>
    <property type="evidence" value="ECO:0000314"/>
    <property type="project" value="BHF-UCL"/>
</dbReference>
<dbReference type="GO" id="GO:0001657">
    <property type="term" value="P:ureteric bud development"/>
    <property type="evidence" value="ECO:0007669"/>
    <property type="project" value="Ensembl"/>
</dbReference>
<dbReference type="CDD" id="cd00063">
    <property type="entry name" value="FN3"/>
    <property type="match status" value="2"/>
</dbReference>
<dbReference type="FunFam" id="2.60.40.10:FF:000281">
    <property type="entry name" value="Cytokine receptor like factor 1"/>
    <property type="match status" value="1"/>
</dbReference>
<dbReference type="FunFam" id="2.60.40.10:FF:000386">
    <property type="entry name" value="Cytokine receptor like factor 1"/>
    <property type="match status" value="1"/>
</dbReference>
<dbReference type="FunFam" id="2.60.40.10:FF:000690">
    <property type="entry name" value="Cytokine receptor like factor 1"/>
    <property type="match status" value="1"/>
</dbReference>
<dbReference type="Gene3D" id="2.60.40.10">
    <property type="entry name" value="Immunoglobulins"/>
    <property type="match status" value="3"/>
</dbReference>
<dbReference type="InterPro" id="IPR003961">
    <property type="entry name" value="FN3_dom"/>
</dbReference>
<dbReference type="InterPro" id="IPR036116">
    <property type="entry name" value="FN3_sf"/>
</dbReference>
<dbReference type="InterPro" id="IPR015152">
    <property type="entry name" value="Growth/epo_recpt_lig-bind"/>
</dbReference>
<dbReference type="InterPro" id="IPR036179">
    <property type="entry name" value="Ig-like_dom_sf"/>
</dbReference>
<dbReference type="InterPro" id="IPR013783">
    <property type="entry name" value="Ig-like_fold"/>
</dbReference>
<dbReference type="InterPro" id="IPR050379">
    <property type="entry name" value="Type-I_Cytokine_Rcpt"/>
</dbReference>
<dbReference type="PANTHER" id="PTHR23036">
    <property type="entry name" value="CYTOKINE RECEPTOR"/>
    <property type="match status" value="1"/>
</dbReference>
<dbReference type="PANTHER" id="PTHR23036:SF16">
    <property type="entry name" value="CYTOKINE RECEPTOR-LIKE FACTOR 1"/>
    <property type="match status" value="1"/>
</dbReference>
<dbReference type="Pfam" id="PF09067">
    <property type="entry name" value="EpoR_lig-bind"/>
    <property type="match status" value="1"/>
</dbReference>
<dbReference type="Pfam" id="PF00041">
    <property type="entry name" value="fn3"/>
    <property type="match status" value="1"/>
</dbReference>
<dbReference type="SMART" id="SM00060">
    <property type="entry name" value="FN3"/>
    <property type="match status" value="2"/>
</dbReference>
<dbReference type="SUPFAM" id="SSF49265">
    <property type="entry name" value="Fibronectin type III"/>
    <property type="match status" value="2"/>
</dbReference>
<dbReference type="SUPFAM" id="SSF48726">
    <property type="entry name" value="Immunoglobulin"/>
    <property type="match status" value="1"/>
</dbReference>
<dbReference type="PROSITE" id="PS50853">
    <property type="entry name" value="FN3"/>
    <property type="match status" value="2"/>
</dbReference>